<reference key="1">
    <citation type="journal article" date="1998" name="DNA Res.">
        <title>Structural analysis of Arabidopsis thaliana chromosome 5. VI. Sequence features of the regions of 1,367,185 bp covered by 19 physically assigned P1 and TAC clones.</title>
        <authorList>
            <person name="Kotani H."/>
            <person name="Nakamura Y."/>
            <person name="Sato S."/>
            <person name="Asamizu E."/>
            <person name="Kaneko T."/>
            <person name="Miyajima N."/>
            <person name="Tabata S."/>
        </authorList>
    </citation>
    <scope>NUCLEOTIDE SEQUENCE [LARGE SCALE GENOMIC DNA]</scope>
    <source>
        <strain>cv. Columbia</strain>
    </source>
</reference>
<reference key="2">
    <citation type="journal article" date="2017" name="Plant J.">
        <title>Araport11: a complete reannotation of the Arabidopsis thaliana reference genome.</title>
        <authorList>
            <person name="Cheng C.Y."/>
            <person name="Krishnakumar V."/>
            <person name="Chan A.P."/>
            <person name="Thibaud-Nissen F."/>
            <person name="Schobel S."/>
            <person name="Town C.D."/>
        </authorList>
    </citation>
    <scope>GENOME REANNOTATION</scope>
    <source>
        <strain>cv. Columbia</strain>
    </source>
</reference>
<comment type="function">
    <text evidence="1">E3 ubiquitin-protein ligase that mediates ubiquitination and subsequent proteasomal degradation of target proteins. E3 ubiquitin ligases accept ubiquitin from an E2 ubiquitin-conjugating enzyme in the form of a thioester and then directly transfers the ubiquitin to targeted substrates. It probably triggers the ubiquitin-mediated degradation of different substrates.</text>
</comment>
<comment type="catalytic activity">
    <reaction>
        <text>S-ubiquitinyl-[E2 ubiquitin-conjugating enzyme]-L-cysteine + [acceptor protein]-L-lysine = [E2 ubiquitin-conjugating enzyme]-L-cysteine + N(6)-ubiquitinyl-[acceptor protein]-L-lysine.</text>
        <dbReference type="EC" id="2.3.2.27"/>
    </reaction>
</comment>
<comment type="pathway">
    <text>Protein modification; protein ubiquitination.</text>
</comment>
<comment type="domain">
    <text evidence="1">The RING-type zinc finger domain is essential for ubiquitin ligase activity.</text>
</comment>
<comment type="domain">
    <text evidence="1">The SBD domain (substrate-binding domain) mediates the homodimerization and the interaction with substrate proteins. It is related to the TRAF family.</text>
</comment>
<comment type="similarity">
    <text evidence="5">Belongs to the SINA (Seven in absentia) family.</text>
</comment>
<sequence length="281" mass="31313">MVGVLLSERNGSQKRHCSSISSDDGRKRVDKTRSAMLTDLDILDCPICYQALKIPVFQCGNGHLACSSCCPKLRNKCPACALPVGHIRCRAMERVLESVLVPCRYADLGCTKTIYYGRESTHEKICNFSPCSCPVQGCNYTGSYKDLYEHYDLTHSTGSTAYSFNGVSYIAAMMFISDKILIERVYEKKLLFVVQCFEEPCGVYVSVSCIAPSAPEVGEFSYGLLYTTWEGVTMTYQSPKVKKVLKVSSQRPKDSFMLIPHSLLCGPLLGMMLCINELKQM</sequence>
<keyword id="KW-0479">Metal-binding</keyword>
<keyword id="KW-1185">Reference proteome</keyword>
<keyword id="KW-0808">Transferase</keyword>
<keyword id="KW-0833">Ubl conjugation pathway</keyword>
<keyword id="KW-0862">Zinc</keyword>
<keyword id="KW-0863">Zinc-finger</keyword>
<feature type="chain" id="PRO_0000299195" description="Putative E3 ubiquitin-protein ligase SINA-like 6">
    <location>
        <begin position="1"/>
        <end position="281"/>
    </location>
</feature>
<feature type="zinc finger region" description="RING-type" evidence="2">
    <location>
        <begin position="45"/>
        <end position="81"/>
    </location>
</feature>
<feature type="zinc finger region" description="SIAH-type" evidence="3">
    <location>
        <begin position="98"/>
        <end position="156"/>
    </location>
</feature>
<feature type="region of interest" description="Disordered" evidence="4">
    <location>
        <begin position="1"/>
        <end position="26"/>
    </location>
</feature>
<feature type="region of interest" description="SBD" evidence="1">
    <location>
        <begin position="95"/>
        <end position="280"/>
    </location>
</feature>
<feature type="binding site" evidence="1">
    <location>
        <position position="103"/>
    </location>
    <ligand>
        <name>Zn(2+)</name>
        <dbReference type="ChEBI" id="CHEBI:29105"/>
        <label>1</label>
    </ligand>
</feature>
<feature type="binding site" evidence="1">
    <location>
        <position position="110"/>
    </location>
    <ligand>
        <name>Zn(2+)</name>
        <dbReference type="ChEBI" id="CHEBI:29105"/>
        <label>1</label>
    </ligand>
</feature>
<feature type="binding site" evidence="1">
    <location>
        <position position="122"/>
    </location>
    <ligand>
        <name>Zn(2+)</name>
        <dbReference type="ChEBI" id="CHEBI:29105"/>
        <label>1</label>
    </ligand>
</feature>
<feature type="binding site" evidence="1">
    <location>
        <position position="126"/>
    </location>
    <ligand>
        <name>Zn(2+)</name>
        <dbReference type="ChEBI" id="CHEBI:29105"/>
        <label>1</label>
    </ligand>
</feature>
<feature type="binding site" evidence="1">
    <location>
        <position position="133"/>
    </location>
    <ligand>
        <name>Zn(2+)</name>
        <dbReference type="ChEBI" id="CHEBI:29105"/>
        <label>2</label>
    </ligand>
</feature>
<feature type="binding site" evidence="1">
    <location>
        <position position="138"/>
    </location>
    <ligand>
        <name>Zn(2+)</name>
        <dbReference type="ChEBI" id="CHEBI:29105"/>
        <label>2</label>
    </ligand>
</feature>
<feature type="binding site" evidence="1">
    <location>
        <position position="150"/>
    </location>
    <ligand>
        <name>Zn(2+)</name>
        <dbReference type="ChEBI" id="CHEBI:29105"/>
        <label>2</label>
    </ligand>
</feature>
<feature type="binding site" evidence="1">
    <location>
        <position position="155"/>
    </location>
    <ligand>
        <name>Zn(2+)</name>
        <dbReference type="ChEBI" id="CHEBI:29105"/>
        <label>2</label>
    </ligand>
</feature>
<evidence type="ECO:0000250" key="1"/>
<evidence type="ECO:0000255" key="2">
    <source>
        <dbReference type="PROSITE-ProRule" id="PRU00175"/>
    </source>
</evidence>
<evidence type="ECO:0000255" key="3">
    <source>
        <dbReference type="PROSITE-ProRule" id="PRU00455"/>
    </source>
</evidence>
<evidence type="ECO:0000256" key="4">
    <source>
        <dbReference type="SAM" id="MobiDB-lite"/>
    </source>
</evidence>
<evidence type="ECO:0000305" key="5"/>
<protein>
    <recommendedName>
        <fullName>Putative E3 ubiquitin-protein ligase SINA-like 6</fullName>
        <ecNumber>2.3.2.27</ecNumber>
    </recommendedName>
    <alternativeName>
        <fullName evidence="5">RING-type E3 ubiquitin transferase SINA-like 6</fullName>
    </alternativeName>
    <alternativeName>
        <fullName>Seven in absentia-like protein 6</fullName>
    </alternativeName>
</protein>
<dbReference type="EC" id="2.3.2.27"/>
<dbReference type="EMBL" id="AB012241">
    <property type="protein sequence ID" value="BAB09033.1"/>
    <property type="molecule type" value="Genomic_DNA"/>
</dbReference>
<dbReference type="EMBL" id="CP002688">
    <property type="protein sequence ID" value="AED94243.1"/>
    <property type="molecule type" value="Genomic_DNA"/>
</dbReference>
<dbReference type="RefSeq" id="NP_198603.1">
    <property type="nucleotide sequence ID" value="NM_123146.1"/>
</dbReference>
<dbReference type="SMR" id="Q9FKD9"/>
<dbReference type="STRING" id="3702.Q9FKD9"/>
<dbReference type="PaxDb" id="3702-AT5G37870.1"/>
<dbReference type="EnsemblPlants" id="AT5G37870.1">
    <property type="protein sequence ID" value="AT5G37870.1"/>
    <property type="gene ID" value="AT5G37870"/>
</dbReference>
<dbReference type="GeneID" id="833765"/>
<dbReference type="Gramene" id="AT5G37870.1">
    <property type="protein sequence ID" value="AT5G37870.1"/>
    <property type="gene ID" value="AT5G37870"/>
</dbReference>
<dbReference type="KEGG" id="ath:AT5G37870"/>
<dbReference type="Araport" id="AT5G37870"/>
<dbReference type="TAIR" id="AT5G37870"/>
<dbReference type="eggNOG" id="KOG3002">
    <property type="taxonomic scope" value="Eukaryota"/>
</dbReference>
<dbReference type="HOGENOM" id="CLU_040603_2_2_1"/>
<dbReference type="InParanoid" id="Q9FKD9"/>
<dbReference type="OMA" id="ANFMLIP"/>
<dbReference type="PhylomeDB" id="Q9FKD9"/>
<dbReference type="UniPathway" id="UPA00143"/>
<dbReference type="PRO" id="PR:Q9FKD9"/>
<dbReference type="Proteomes" id="UP000006548">
    <property type="component" value="Chromosome 5"/>
</dbReference>
<dbReference type="ExpressionAtlas" id="Q9FKD9">
    <property type="expression patterns" value="baseline and differential"/>
</dbReference>
<dbReference type="GO" id="GO:0016740">
    <property type="term" value="F:transferase activity"/>
    <property type="evidence" value="ECO:0007669"/>
    <property type="project" value="UniProtKB-KW"/>
</dbReference>
<dbReference type="GO" id="GO:0008270">
    <property type="term" value="F:zinc ion binding"/>
    <property type="evidence" value="ECO:0007669"/>
    <property type="project" value="UniProtKB-KW"/>
</dbReference>
<dbReference type="GO" id="GO:0016567">
    <property type="term" value="P:protein ubiquitination"/>
    <property type="evidence" value="ECO:0007669"/>
    <property type="project" value="UniProtKB-UniPathway"/>
</dbReference>
<dbReference type="CDD" id="cd16571">
    <property type="entry name" value="RING-HC_SIAHs"/>
    <property type="match status" value="1"/>
</dbReference>
<dbReference type="FunFam" id="3.30.40.10:FF:000840">
    <property type="entry name" value="E3 ubiquitin-protein ligase SINA-like 5"/>
    <property type="match status" value="1"/>
</dbReference>
<dbReference type="Gene3D" id="3.30.40.10">
    <property type="entry name" value="Zinc/RING finger domain, C3HC4 (zinc finger)"/>
    <property type="match status" value="2"/>
</dbReference>
<dbReference type="InterPro" id="IPR049548">
    <property type="entry name" value="Sina-like_RING"/>
</dbReference>
<dbReference type="InterPro" id="IPR044286">
    <property type="entry name" value="SINL_plant"/>
</dbReference>
<dbReference type="InterPro" id="IPR001841">
    <property type="entry name" value="Znf_RING"/>
</dbReference>
<dbReference type="InterPro" id="IPR013083">
    <property type="entry name" value="Znf_RING/FYVE/PHD"/>
</dbReference>
<dbReference type="InterPro" id="IPR013010">
    <property type="entry name" value="Znf_SIAH"/>
</dbReference>
<dbReference type="PANTHER" id="PTHR46632">
    <property type="entry name" value="E3 UBIQUITIN-PROTEIN LIGASE SINA-LIKE 4"/>
    <property type="match status" value="1"/>
</dbReference>
<dbReference type="PANTHER" id="PTHR46632:SF3">
    <property type="entry name" value="E3 UBIQUITIN-PROTEIN LIGASE SINA-LIKE 7-RELATED"/>
    <property type="match status" value="1"/>
</dbReference>
<dbReference type="Pfam" id="PF21362">
    <property type="entry name" value="Sina_RING"/>
    <property type="match status" value="1"/>
</dbReference>
<dbReference type="Pfam" id="PF21361">
    <property type="entry name" value="Sina_ZnF"/>
    <property type="match status" value="1"/>
</dbReference>
<dbReference type="SUPFAM" id="SSF57850">
    <property type="entry name" value="RING/U-box"/>
    <property type="match status" value="1"/>
</dbReference>
<dbReference type="SUPFAM" id="SSF49599">
    <property type="entry name" value="TRAF domain-like"/>
    <property type="match status" value="1"/>
</dbReference>
<dbReference type="PROSITE" id="PS50089">
    <property type="entry name" value="ZF_RING_2"/>
    <property type="match status" value="1"/>
</dbReference>
<dbReference type="PROSITE" id="PS51081">
    <property type="entry name" value="ZF_SIAH"/>
    <property type="match status" value="1"/>
</dbReference>
<gene>
    <name type="ordered locus">At5g37870</name>
    <name type="ORF">K18L3.4</name>
</gene>
<name>SINL6_ARATH</name>
<proteinExistence type="inferred from homology"/>
<accession>Q9FKD9</accession>
<organism>
    <name type="scientific">Arabidopsis thaliana</name>
    <name type="common">Mouse-ear cress</name>
    <dbReference type="NCBI Taxonomy" id="3702"/>
    <lineage>
        <taxon>Eukaryota</taxon>
        <taxon>Viridiplantae</taxon>
        <taxon>Streptophyta</taxon>
        <taxon>Embryophyta</taxon>
        <taxon>Tracheophyta</taxon>
        <taxon>Spermatophyta</taxon>
        <taxon>Magnoliopsida</taxon>
        <taxon>eudicotyledons</taxon>
        <taxon>Gunneridae</taxon>
        <taxon>Pentapetalae</taxon>
        <taxon>rosids</taxon>
        <taxon>malvids</taxon>
        <taxon>Brassicales</taxon>
        <taxon>Brassicaceae</taxon>
        <taxon>Camelineae</taxon>
        <taxon>Arabidopsis</taxon>
    </lineage>
</organism>